<gene>
    <name evidence="1" type="primary">efp</name>
    <name type="ordered locus">SSPA3855</name>
</gene>
<organism>
    <name type="scientific">Salmonella paratyphi A (strain AKU_12601)</name>
    <dbReference type="NCBI Taxonomy" id="554290"/>
    <lineage>
        <taxon>Bacteria</taxon>
        <taxon>Pseudomonadati</taxon>
        <taxon>Pseudomonadota</taxon>
        <taxon>Gammaproteobacteria</taxon>
        <taxon>Enterobacterales</taxon>
        <taxon>Enterobacteriaceae</taxon>
        <taxon>Salmonella</taxon>
    </lineage>
</organism>
<name>EFP_SALPK</name>
<proteinExistence type="inferred from homology"/>
<dbReference type="EMBL" id="FM200053">
    <property type="protein sequence ID" value="CAR62141.1"/>
    <property type="molecule type" value="Genomic_DNA"/>
</dbReference>
<dbReference type="RefSeq" id="WP_000257282.1">
    <property type="nucleotide sequence ID" value="NC_011147.1"/>
</dbReference>
<dbReference type="SMR" id="B5BKF8"/>
<dbReference type="GeneID" id="66758562"/>
<dbReference type="KEGG" id="sek:SSPA3855"/>
<dbReference type="HOGENOM" id="CLU_074944_0_0_6"/>
<dbReference type="UniPathway" id="UPA00345"/>
<dbReference type="Proteomes" id="UP000001869">
    <property type="component" value="Chromosome"/>
</dbReference>
<dbReference type="GO" id="GO:0005829">
    <property type="term" value="C:cytosol"/>
    <property type="evidence" value="ECO:0007669"/>
    <property type="project" value="UniProtKB-ARBA"/>
</dbReference>
<dbReference type="GO" id="GO:0003746">
    <property type="term" value="F:translation elongation factor activity"/>
    <property type="evidence" value="ECO:0007669"/>
    <property type="project" value="UniProtKB-UniRule"/>
</dbReference>
<dbReference type="GO" id="GO:0043043">
    <property type="term" value="P:peptide biosynthetic process"/>
    <property type="evidence" value="ECO:0007669"/>
    <property type="project" value="InterPro"/>
</dbReference>
<dbReference type="CDD" id="cd04470">
    <property type="entry name" value="S1_EF-P_repeat_1"/>
    <property type="match status" value="1"/>
</dbReference>
<dbReference type="CDD" id="cd05794">
    <property type="entry name" value="S1_EF-P_repeat_2"/>
    <property type="match status" value="1"/>
</dbReference>
<dbReference type="FunFam" id="2.30.30.30:FF:000003">
    <property type="entry name" value="Elongation factor P"/>
    <property type="match status" value="1"/>
</dbReference>
<dbReference type="FunFam" id="2.40.50.140:FF:000004">
    <property type="entry name" value="Elongation factor P"/>
    <property type="match status" value="1"/>
</dbReference>
<dbReference type="FunFam" id="2.40.50.140:FF:000009">
    <property type="entry name" value="Elongation factor P"/>
    <property type="match status" value="1"/>
</dbReference>
<dbReference type="Gene3D" id="2.30.30.30">
    <property type="match status" value="1"/>
</dbReference>
<dbReference type="Gene3D" id="2.40.50.140">
    <property type="entry name" value="Nucleic acid-binding proteins"/>
    <property type="match status" value="2"/>
</dbReference>
<dbReference type="HAMAP" id="MF_00141">
    <property type="entry name" value="EF_P"/>
    <property type="match status" value="1"/>
</dbReference>
<dbReference type="InterPro" id="IPR015365">
    <property type="entry name" value="Elong-fact-P_C"/>
</dbReference>
<dbReference type="InterPro" id="IPR012340">
    <property type="entry name" value="NA-bd_OB-fold"/>
</dbReference>
<dbReference type="InterPro" id="IPR014722">
    <property type="entry name" value="Rib_uL2_dom2"/>
</dbReference>
<dbReference type="InterPro" id="IPR020599">
    <property type="entry name" value="Transl_elong_fac_P/YeiP"/>
</dbReference>
<dbReference type="InterPro" id="IPR013185">
    <property type="entry name" value="Transl_elong_KOW-like"/>
</dbReference>
<dbReference type="InterPro" id="IPR001059">
    <property type="entry name" value="Transl_elong_P/YeiP_cen"/>
</dbReference>
<dbReference type="InterPro" id="IPR013852">
    <property type="entry name" value="Transl_elong_P/YeiP_CS"/>
</dbReference>
<dbReference type="InterPro" id="IPR011768">
    <property type="entry name" value="Transl_elongation_fac_P"/>
</dbReference>
<dbReference type="InterPro" id="IPR008991">
    <property type="entry name" value="Translation_prot_SH3-like_sf"/>
</dbReference>
<dbReference type="NCBIfam" id="TIGR00038">
    <property type="entry name" value="efp"/>
    <property type="match status" value="1"/>
</dbReference>
<dbReference type="NCBIfam" id="NF001810">
    <property type="entry name" value="PRK00529.1"/>
    <property type="match status" value="1"/>
</dbReference>
<dbReference type="PANTHER" id="PTHR30053">
    <property type="entry name" value="ELONGATION FACTOR P"/>
    <property type="match status" value="1"/>
</dbReference>
<dbReference type="PANTHER" id="PTHR30053:SF12">
    <property type="entry name" value="ELONGATION FACTOR P (EF-P) FAMILY PROTEIN"/>
    <property type="match status" value="1"/>
</dbReference>
<dbReference type="Pfam" id="PF01132">
    <property type="entry name" value="EFP"/>
    <property type="match status" value="1"/>
</dbReference>
<dbReference type="Pfam" id="PF08207">
    <property type="entry name" value="EFP_N"/>
    <property type="match status" value="1"/>
</dbReference>
<dbReference type="Pfam" id="PF09285">
    <property type="entry name" value="Elong-fact-P_C"/>
    <property type="match status" value="1"/>
</dbReference>
<dbReference type="PIRSF" id="PIRSF005901">
    <property type="entry name" value="EF-P"/>
    <property type="match status" value="1"/>
</dbReference>
<dbReference type="SMART" id="SM01185">
    <property type="entry name" value="EFP"/>
    <property type="match status" value="1"/>
</dbReference>
<dbReference type="SMART" id="SM00841">
    <property type="entry name" value="Elong-fact-P_C"/>
    <property type="match status" value="1"/>
</dbReference>
<dbReference type="SUPFAM" id="SSF50249">
    <property type="entry name" value="Nucleic acid-binding proteins"/>
    <property type="match status" value="2"/>
</dbReference>
<dbReference type="SUPFAM" id="SSF50104">
    <property type="entry name" value="Translation proteins SH3-like domain"/>
    <property type="match status" value="1"/>
</dbReference>
<dbReference type="PROSITE" id="PS01275">
    <property type="entry name" value="EFP"/>
    <property type="match status" value="1"/>
</dbReference>
<sequence>MATYYSNDFRSGLKIMLDGEPYAVESSEFVKPGKGQAFARVKLRRLLTGTRVEKTFKSTDSAEGADVVDMNLTYLYNDGEFWHFMNNETFEQLSADAKAIGDNAKWLLDQAECIVTLWNGQPISVTPPNFVELEIVDTDPGLKGDTAGTGGKPATLSTGAVVKVPLFVQIGEVIKVDTRSGEYVSRVK</sequence>
<reference key="1">
    <citation type="journal article" date="2009" name="BMC Genomics">
        <title>Pseudogene accumulation in the evolutionary histories of Salmonella enterica serovars Paratyphi A and Typhi.</title>
        <authorList>
            <person name="Holt K.E."/>
            <person name="Thomson N.R."/>
            <person name="Wain J."/>
            <person name="Langridge G.C."/>
            <person name="Hasan R."/>
            <person name="Bhutta Z.A."/>
            <person name="Quail M.A."/>
            <person name="Norbertczak H."/>
            <person name="Walker D."/>
            <person name="Simmonds M."/>
            <person name="White B."/>
            <person name="Bason N."/>
            <person name="Mungall K."/>
            <person name="Dougan G."/>
            <person name="Parkhill J."/>
        </authorList>
    </citation>
    <scope>NUCLEOTIDE SEQUENCE [LARGE SCALE GENOMIC DNA]</scope>
    <source>
        <strain>AKU_12601</strain>
    </source>
</reference>
<accession>B5BKF8</accession>
<protein>
    <recommendedName>
        <fullName evidence="1">Elongation factor P</fullName>
        <shortName evidence="1">EF-P</shortName>
    </recommendedName>
</protein>
<comment type="function">
    <text evidence="1">Involved in peptide bond synthesis. Alleviates ribosome stalling that occurs when 3 or more consecutive Pro residues or the sequence PPG is present in a protein, possibly by augmenting the peptidyl transferase activity of the ribosome. Modification of Lys-34 is required for alleviation.</text>
</comment>
<comment type="pathway">
    <text evidence="1">Protein biosynthesis; polypeptide chain elongation.</text>
</comment>
<comment type="subcellular location">
    <subcellularLocation>
        <location evidence="1">Cytoplasm</location>
    </subcellularLocation>
</comment>
<comment type="PTM">
    <text evidence="1">Is beta-lysylated on the epsilon-amino group of Lys-34 by the combined action of EpmA and EpmB, and then hydroxylated on the C5 position of the same residue by EpmC. Lysylation is critical for the stimulatory effect of EF-P on peptide-bond formation. The lysylation moiety would extend toward the peptidyltransferase center and stabilize the terminal 3-CCA end of the tRNA. The hydroxylation of the C5 position on Lys-34 would allow additional potential stabilizing hydrogen-bond interactions with the P-tRNA.</text>
</comment>
<comment type="similarity">
    <text evidence="1">Belongs to the elongation factor P family.</text>
</comment>
<feature type="chain" id="PRO_1000096203" description="Elongation factor P">
    <location>
        <begin position="1"/>
        <end position="188"/>
    </location>
</feature>
<feature type="modified residue" description="N6-(3,6-diaminohexanoyl)-5-hydroxylysine" evidence="1">
    <location>
        <position position="34"/>
    </location>
</feature>
<evidence type="ECO:0000255" key="1">
    <source>
        <dbReference type="HAMAP-Rule" id="MF_00141"/>
    </source>
</evidence>
<keyword id="KW-0963">Cytoplasm</keyword>
<keyword id="KW-0251">Elongation factor</keyword>
<keyword id="KW-0379">Hydroxylation</keyword>
<keyword id="KW-0648">Protein biosynthesis</keyword>